<reference key="1">
    <citation type="journal article" date="2004" name="Nature">
        <title>Genome evolution in yeasts.</title>
        <authorList>
            <person name="Dujon B."/>
            <person name="Sherman D."/>
            <person name="Fischer G."/>
            <person name="Durrens P."/>
            <person name="Casaregola S."/>
            <person name="Lafontaine I."/>
            <person name="de Montigny J."/>
            <person name="Marck C."/>
            <person name="Neuveglise C."/>
            <person name="Talla E."/>
            <person name="Goffard N."/>
            <person name="Frangeul L."/>
            <person name="Aigle M."/>
            <person name="Anthouard V."/>
            <person name="Babour A."/>
            <person name="Barbe V."/>
            <person name="Barnay S."/>
            <person name="Blanchin S."/>
            <person name="Beckerich J.-M."/>
            <person name="Beyne E."/>
            <person name="Bleykasten C."/>
            <person name="Boisrame A."/>
            <person name="Boyer J."/>
            <person name="Cattolico L."/>
            <person name="Confanioleri F."/>
            <person name="de Daruvar A."/>
            <person name="Despons L."/>
            <person name="Fabre E."/>
            <person name="Fairhead C."/>
            <person name="Ferry-Dumazet H."/>
            <person name="Groppi A."/>
            <person name="Hantraye F."/>
            <person name="Hennequin C."/>
            <person name="Jauniaux N."/>
            <person name="Joyet P."/>
            <person name="Kachouri R."/>
            <person name="Kerrest A."/>
            <person name="Koszul R."/>
            <person name="Lemaire M."/>
            <person name="Lesur I."/>
            <person name="Ma L."/>
            <person name="Muller H."/>
            <person name="Nicaud J.-M."/>
            <person name="Nikolski M."/>
            <person name="Oztas S."/>
            <person name="Ozier-Kalogeropoulos O."/>
            <person name="Pellenz S."/>
            <person name="Potier S."/>
            <person name="Richard G.-F."/>
            <person name="Straub M.-L."/>
            <person name="Suleau A."/>
            <person name="Swennen D."/>
            <person name="Tekaia F."/>
            <person name="Wesolowski-Louvel M."/>
            <person name="Westhof E."/>
            <person name="Wirth B."/>
            <person name="Zeniou-Meyer M."/>
            <person name="Zivanovic Y."/>
            <person name="Bolotin-Fukuhara M."/>
            <person name="Thierry A."/>
            <person name="Bouchier C."/>
            <person name="Caudron B."/>
            <person name="Scarpelli C."/>
            <person name="Gaillardin C."/>
            <person name="Weissenbach J."/>
            <person name="Wincker P."/>
            <person name="Souciet J.-L."/>
        </authorList>
    </citation>
    <scope>NUCLEOTIDE SEQUENCE [LARGE SCALE GENOMIC DNA]</scope>
    <source>
        <strain>CLIB 122 / E 150</strain>
    </source>
</reference>
<dbReference type="EMBL" id="CR382128">
    <property type="protein sequence ID" value="CAG83058.1"/>
    <property type="molecule type" value="Genomic_DNA"/>
</dbReference>
<dbReference type="RefSeq" id="XP_500807.1">
    <property type="nucleotide sequence ID" value="XM_500807.1"/>
</dbReference>
<dbReference type="SMR" id="Q6CEV5"/>
<dbReference type="FunCoup" id="Q6CEV5">
    <property type="interactions" value="221"/>
</dbReference>
<dbReference type="STRING" id="284591.Q6CEV5"/>
<dbReference type="EnsemblFungi" id="CAG83058">
    <property type="protein sequence ID" value="CAG83058"/>
    <property type="gene ID" value="YALI0_B12584g"/>
</dbReference>
<dbReference type="KEGG" id="yli:2907028"/>
<dbReference type="VEuPathDB" id="FungiDB:YALI0_B12584g"/>
<dbReference type="HOGENOM" id="CLU_010580_0_0_1"/>
<dbReference type="InParanoid" id="Q6CEV5"/>
<dbReference type="OMA" id="MLGTKSY"/>
<dbReference type="OrthoDB" id="124339at4891"/>
<dbReference type="Proteomes" id="UP000001300">
    <property type="component" value="Chromosome B"/>
</dbReference>
<dbReference type="GO" id="GO:0035267">
    <property type="term" value="C:NuA4 histone acetyltransferase complex"/>
    <property type="evidence" value="ECO:0007669"/>
    <property type="project" value="InterPro"/>
</dbReference>
<dbReference type="GO" id="GO:0005634">
    <property type="term" value="C:nucleus"/>
    <property type="evidence" value="ECO:0007669"/>
    <property type="project" value="UniProtKB-SubCell"/>
</dbReference>
<dbReference type="GO" id="GO:0032777">
    <property type="term" value="C:piccolo histone acetyltransferase complex"/>
    <property type="evidence" value="ECO:0000318"/>
    <property type="project" value="GO_Central"/>
</dbReference>
<dbReference type="GO" id="GO:0006281">
    <property type="term" value="P:DNA repair"/>
    <property type="evidence" value="ECO:0007669"/>
    <property type="project" value="UniProtKB-KW"/>
</dbReference>
<dbReference type="GO" id="GO:0006357">
    <property type="term" value="P:regulation of transcription by RNA polymerase II"/>
    <property type="evidence" value="ECO:0000318"/>
    <property type="project" value="GO_Central"/>
</dbReference>
<dbReference type="InterPro" id="IPR024943">
    <property type="entry name" value="Enhancer_polycomb"/>
</dbReference>
<dbReference type="InterPro" id="IPR019542">
    <property type="entry name" value="Enhancer_polycomb-like_N"/>
</dbReference>
<dbReference type="PANTHER" id="PTHR14898">
    <property type="entry name" value="ENHANCER OF POLYCOMB"/>
    <property type="match status" value="1"/>
</dbReference>
<dbReference type="Pfam" id="PF10513">
    <property type="entry name" value="EPL1"/>
    <property type="match status" value="1"/>
</dbReference>
<feature type="chain" id="PRO_0000214166" description="Enhancer of polycomb-like protein 1">
    <location>
        <begin position="1"/>
        <end position="839"/>
    </location>
</feature>
<feature type="region of interest" description="Disordered" evidence="2">
    <location>
        <begin position="350"/>
        <end position="379"/>
    </location>
</feature>
<feature type="region of interest" description="Disordered" evidence="2">
    <location>
        <begin position="393"/>
        <end position="415"/>
    </location>
</feature>
<feature type="region of interest" description="Disordered" evidence="2">
    <location>
        <begin position="608"/>
        <end position="640"/>
    </location>
</feature>
<feature type="region of interest" description="Disordered" evidence="2">
    <location>
        <begin position="679"/>
        <end position="839"/>
    </location>
</feature>
<feature type="compositionally biased region" description="Basic and acidic residues" evidence="2">
    <location>
        <begin position="608"/>
        <end position="620"/>
    </location>
</feature>
<feature type="compositionally biased region" description="Polar residues" evidence="2">
    <location>
        <begin position="621"/>
        <end position="640"/>
    </location>
</feature>
<feature type="compositionally biased region" description="Low complexity" evidence="2">
    <location>
        <begin position="679"/>
        <end position="690"/>
    </location>
</feature>
<feature type="compositionally biased region" description="Gly residues" evidence="2">
    <location>
        <begin position="697"/>
        <end position="713"/>
    </location>
</feature>
<feature type="compositionally biased region" description="Polar residues" evidence="2">
    <location>
        <begin position="714"/>
        <end position="730"/>
    </location>
</feature>
<feature type="compositionally biased region" description="Low complexity" evidence="2">
    <location>
        <begin position="747"/>
        <end position="786"/>
    </location>
</feature>
<feature type="compositionally biased region" description="Basic and acidic residues" evidence="2">
    <location>
        <begin position="828"/>
        <end position="839"/>
    </location>
</feature>
<protein>
    <recommendedName>
        <fullName>Enhancer of polycomb-like protein 1</fullName>
    </recommendedName>
</protein>
<gene>
    <name type="primary">EPL1</name>
    <name type="ordered locus">YALI0B12584g</name>
</gene>
<accession>Q6CEV5</accession>
<proteinExistence type="inferred from homology"/>
<comment type="function">
    <text evidence="1">Component of the NuA4 histone acetyltransferase complex which is involved in transcriptional activation of selected genes principally by acetylation of nucleosomal histone H4 and H2A. The NuA4 complex is also involved in DNA repair. Involved in gene silencing by neighboring heterochromatin, blockage of the silencing spreading along the chromosome, and required for cell cycle progression through G2/M (By similarity).</text>
</comment>
<comment type="subunit">
    <text evidence="1">Component of the NuA4 histone acetyltransferase complex.</text>
</comment>
<comment type="subcellular location">
    <subcellularLocation>
        <location evidence="1">Nucleus</location>
    </subcellularLocation>
</comment>
<comment type="similarity">
    <text evidence="3">Belongs to the enhancer of polycomb family.</text>
</comment>
<sequence>MAKAAKAAGSSARFRQRKISVKQTLAVLKQSDIPDLEEEQQRELQQIETGVEKGEEEEHHLQAAINSSIAQSTGAKVEKIYIPTPDASQVWKEYDRFYSSSFHEPASYIRTSVTVEETSGCLYNMDDEDAEFLKTCKPPISEDDFEEVMHRFEVTISEKQPFVSIDVSNLLSFEEMAQHIEDGIRQVQEDPTSPEYILAQLQSSLGITVNGTKGKNEGKAFLATFKKIGAVIYPHWRARKVERKGQSIVPHLKFEDHEKDDSDPYVCFRRRELRQVRKTRRTDVLSIERLRRMQAEMETAKQLVEMVATREFTRKAALKAEWDVFEDRCAIKTLKRELGIKGEDEDLVAQKKRKVEPKKEEKAEKASTPVRGGKAAGSAASAQAAAAQAAAAGSGSPSVSSTHVPPNVSIPPSKIPNMDLITIAQVVRDKDEAIAKAVREKLRLRADADRDWHNLTNSGYIPYCEYLNAEVSSSGEPPVPQYSSINEMAYFEKHNASHRYTTKSDFNKDLASMVGNKPFADAQVYGAIVGDDGELRLSDATSTSSPVDRVIPRSSFMSMRKRVGRGGRMWMDRRGLQRNTVLKPSSLAKNSLDDTAESEADEVAMERLADRQKYDRETEPTRQMSSYDKDPSQLNGISSDTQSIRFGSMLLSKAYENYREVFQQRQQQLMMLQQQILQQQQQQQMRNRQQSHPPGDPGAGLGGGQGAGGGAGGSRNNSPAPGTNGPQSKMHNAAPMGYNKQGMTPSQHQQYQQMQQQQQQQQQQQQQRKMGVAPMNAASAAAAMAAQPRRSSGSPDGQRFNGLPNGGAMANGVLPNGMSQRMMPGGDMKQKSELAKVDA</sequence>
<evidence type="ECO:0000250" key="1"/>
<evidence type="ECO:0000256" key="2">
    <source>
        <dbReference type="SAM" id="MobiDB-lite"/>
    </source>
</evidence>
<evidence type="ECO:0000305" key="3"/>
<name>EPL1_YARLI</name>
<keyword id="KW-0131">Cell cycle</keyword>
<keyword id="KW-0227">DNA damage</keyword>
<keyword id="KW-0234">DNA repair</keyword>
<keyword id="KW-0539">Nucleus</keyword>
<keyword id="KW-1185">Reference proteome</keyword>
<keyword id="KW-0804">Transcription</keyword>
<keyword id="KW-0805">Transcription regulation</keyword>
<organism>
    <name type="scientific">Yarrowia lipolytica (strain CLIB 122 / E 150)</name>
    <name type="common">Yeast</name>
    <name type="synonym">Candida lipolytica</name>
    <dbReference type="NCBI Taxonomy" id="284591"/>
    <lineage>
        <taxon>Eukaryota</taxon>
        <taxon>Fungi</taxon>
        <taxon>Dikarya</taxon>
        <taxon>Ascomycota</taxon>
        <taxon>Saccharomycotina</taxon>
        <taxon>Dipodascomycetes</taxon>
        <taxon>Dipodascales</taxon>
        <taxon>Dipodascales incertae sedis</taxon>
        <taxon>Yarrowia</taxon>
    </lineage>
</organism>